<comment type="catalytic activity">
    <reaction evidence="1">
        <text>1-(2-carboxyphenylamino)-1-deoxy-D-ribulose 5-phosphate + H(+) = (1S,2R)-1-C-(indol-3-yl)glycerol 3-phosphate + CO2 + H2O</text>
        <dbReference type="Rhea" id="RHEA:23476"/>
        <dbReference type="ChEBI" id="CHEBI:15377"/>
        <dbReference type="ChEBI" id="CHEBI:15378"/>
        <dbReference type="ChEBI" id="CHEBI:16526"/>
        <dbReference type="ChEBI" id="CHEBI:58613"/>
        <dbReference type="ChEBI" id="CHEBI:58866"/>
        <dbReference type="EC" id="4.1.1.48"/>
    </reaction>
</comment>
<comment type="pathway">
    <text evidence="1">Amino-acid biosynthesis; L-tryptophan biosynthesis; L-tryptophan from chorismate: step 4/5.</text>
</comment>
<comment type="similarity">
    <text evidence="1">Belongs to the TrpC family.</text>
</comment>
<keyword id="KW-0028">Amino-acid biosynthesis</keyword>
<keyword id="KW-0057">Aromatic amino acid biosynthesis</keyword>
<keyword id="KW-0210">Decarboxylase</keyword>
<keyword id="KW-0456">Lyase</keyword>
<keyword id="KW-0822">Tryptophan biosynthesis</keyword>
<reference key="1">
    <citation type="journal article" date="2011" name="J. Bacteriol.">
        <title>Genome sequence of lineage III Listeria monocytogenes strain HCC23.</title>
        <authorList>
            <person name="Steele C.L."/>
            <person name="Donaldson J.R."/>
            <person name="Paul D."/>
            <person name="Banes M.M."/>
            <person name="Arick T."/>
            <person name="Bridges S.M."/>
            <person name="Lawrence M.L."/>
        </authorList>
    </citation>
    <scope>NUCLEOTIDE SEQUENCE [LARGE SCALE GENOMIC DNA]</scope>
    <source>
        <strain>HCC23</strain>
    </source>
</reference>
<proteinExistence type="inferred from homology"/>
<name>TRPC_LISMH</name>
<dbReference type="EC" id="4.1.1.48" evidence="1"/>
<dbReference type="EMBL" id="CP001175">
    <property type="protein sequence ID" value="ACK39281.1"/>
    <property type="molecule type" value="Genomic_DNA"/>
</dbReference>
<dbReference type="RefSeq" id="WP_003732530.1">
    <property type="nucleotide sequence ID" value="NC_011660.1"/>
</dbReference>
<dbReference type="SMR" id="B8DHB2"/>
<dbReference type="KEGG" id="lmh:LMHCC_0932"/>
<dbReference type="HOGENOM" id="CLU_034247_2_1_9"/>
<dbReference type="UniPathway" id="UPA00035">
    <property type="reaction ID" value="UER00043"/>
</dbReference>
<dbReference type="GO" id="GO:0004425">
    <property type="term" value="F:indole-3-glycerol-phosphate synthase activity"/>
    <property type="evidence" value="ECO:0007669"/>
    <property type="project" value="UniProtKB-UniRule"/>
</dbReference>
<dbReference type="GO" id="GO:0004640">
    <property type="term" value="F:phosphoribosylanthranilate isomerase activity"/>
    <property type="evidence" value="ECO:0007669"/>
    <property type="project" value="TreeGrafter"/>
</dbReference>
<dbReference type="GO" id="GO:0000162">
    <property type="term" value="P:L-tryptophan biosynthetic process"/>
    <property type="evidence" value="ECO:0007669"/>
    <property type="project" value="UniProtKB-UniRule"/>
</dbReference>
<dbReference type="CDD" id="cd00331">
    <property type="entry name" value="IGPS"/>
    <property type="match status" value="1"/>
</dbReference>
<dbReference type="FunFam" id="3.20.20.70:FF:000024">
    <property type="entry name" value="Indole-3-glycerol phosphate synthase"/>
    <property type="match status" value="1"/>
</dbReference>
<dbReference type="Gene3D" id="3.20.20.70">
    <property type="entry name" value="Aldolase class I"/>
    <property type="match status" value="1"/>
</dbReference>
<dbReference type="HAMAP" id="MF_00134_B">
    <property type="entry name" value="IGPS_B"/>
    <property type="match status" value="1"/>
</dbReference>
<dbReference type="InterPro" id="IPR013785">
    <property type="entry name" value="Aldolase_TIM"/>
</dbReference>
<dbReference type="InterPro" id="IPR045186">
    <property type="entry name" value="Indole-3-glycerol_P_synth"/>
</dbReference>
<dbReference type="InterPro" id="IPR013798">
    <property type="entry name" value="Indole-3-glycerol_P_synth_dom"/>
</dbReference>
<dbReference type="InterPro" id="IPR001468">
    <property type="entry name" value="Indole-3-GlycerolPSynthase_CS"/>
</dbReference>
<dbReference type="InterPro" id="IPR011060">
    <property type="entry name" value="RibuloseP-bd_barrel"/>
</dbReference>
<dbReference type="NCBIfam" id="NF001371">
    <property type="entry name" value="PRK00278.1-3"/>
    <property type="match status" value="1"/>
</dbReference>
<dbReference type="NCBIfam" id="NF001377">
    <property type="entry name" value="PRK00278.2-4"/>
    <property type="match status" value="1"/>
</dbReference>
<dbReference type="PANTHER" id="PTHR22854:SF2">
    <property type="entry name" value="INDOLE-3-GLYCEROL-PHOSPHATE SYNTHASE"/>
    <property type="match status" value="1"/>
</dbReference>
<dbReference type="PANTHER" id="PTHR22854">
    <property type="entry name" value="TRYPTOPHAN BIOSYNTHESIS PROTEIN"/>
    <property type="match status" value="1"/>
</dbReference>
<dbReference type="Pfam" id="PF00218">
    <property type="entry name" value="IGPS"/>
    <property type="match status" value="1"/>
</dbReference>
<dbReference type="SUPFAM" id="SSF51366">
    <property type="entry name" value="Ribulose-phoshate binding barrel"/>
    <property type="match status" value="1"/>
</dbReference>
<dbReference type="PROSITE" id="PS00614">
    <property type="entry name" value="IGPS"/>
    <property type="match status" value="1"/>
</dbReference>
<sequence>MTFLEEILAQKAVEVADMPLEKVAEKRKTYSFYEFLKANTNTMQLIAEVKRASPSKGEINMGVNPVLQAKSYQAAGAGMISVLTDPVFFKGSIEDLREVAKNVEIPVLCKDFIISEKQLIRARNAGATVVLLIISALTEEMLITLFEQALALDLEVLVEVHDQKELAVAQKIGAKLIGVNNRNLHTFEVDIAVSERLASDFSSDACFISESGFRTAEDVARVSQKYNAVLVGEALMREATPEAAAKSLKVTR</sequence>
<protein>
    <recommendedName>
        <fullName evidence="1">Indole-3-glycerol phosphate synthase</fullName>
        <shortName evidence="1">IGPS</shortName>
        <ecNumber evidence="1">4.1.1.48</ecNumber>
    </recommendedName>
</protein>
<evidence type="ECO:0000255" key="1">
    <source>
        <dbReference type="HAMAP-Rule" id="MF_00134"/>
    </source>
</evidence>
<accession>B8DHB2</accession>
<gene>
    <name evidence="1" type="primary">trpC</name>
    <name type="ordered locus">LMHCC_0932</name>
</gene>
<organism>
    <name type="scientific">Listeria monocytogenes serotype 4a (strain HCC23)</name>
    <dbReference type="NCBI Taxonomy" id="552536"/>
    <lineage>
        <taxon>Bacteria</taxon>
        <taxon>Bacillati</taxon>
        <taxon>Bacillota</taxon>
        <taxon>Bacilli</taxon>
        <taxon>Bacillales</taxon>
        <taxon>Listeriaceae</taxon>
        <taxon>Listeria</taxon>
    </lineage>
</organism>
<feature type="chain" id="PRO_1000198777" description="Indole-3-glycerol phosphate synthase">
    <location>
        <begin position="1"/>
        <end position="252"/>
    </location>
</feature>